<evidence type="ECO:0000250" key="1">
    <source>
        <dbReference type="UniProtKB" id="P42763"/>
    </source>
</evidence>
<evidence type="ECO:0000256" key="2">
    <source>
        <dbReference type="SAM" id="MobiDB-lite"/>
    </source>
</evidence>
<evidence type="ECO:0000269" key="3">
    <source>
    </source>
</evidence>
<evidence type="ECO:0000269" key="4">
    <source>
    </source>
</evidence>
<evidence type="ECO:0000303" key="5">
    <source>
    </source>
</evidence>
<evidence type="ECO:0000303" key="6">
    <source>
    </source>
</evidence>
<evidence type="ECO:0000305" key="7"/>
<evidence type="ECO:0000305" key="8">
    <source>
    </source>
</evidence>
<evidence type="ECO:0000312" key="9">
    <source>
        <dbReference type="EMBL" id="KEH27046.1"/>
    </source>
</evidence>
<evidence type="ECO:0000312" key="10">
    <source>
        <dbReference type="EMBL" id="RHN52821.1"/>
    </source>
</evidence>
<protein>
    <recommendedName>
        <fullName evidence="7">Dehydrin CAS31</fullName>
    </recommendedName>
    <alternativeName>
        <fullName evidence="5">Cold-acclimation specific protein 31</fullName>
        <shortName evidence="5 6">MtCAS31</shortName>
    </alternativeName>
</protein>
<reference key="1">
    <citation type="journal article" date="2008" name="Plant Physiol.">
        <title>Comparative genomic sequence and expression analyses of Medicago truncatula and alfalfa subspecies falcata COLD-ACCLIMATION-SPECIFIC genes.</title>
        <authorList>
            <person name="Pennycooke J.C."/>
            <person name="Cheng H."/>
            <person name="Stockinger E.J."/>
        </authorList>
    </citation>
    <scope>NUCLEOTIDE SEQUENCE [GENOMIC DNA]</scope>
    <scope>INDUCTION BY COLD</scope>
    <source>
        <strain>cv. Jemalong</strain>
    </source>
</reference>
<reference key="2">
    <citation type="submission" date="2012-05" db="EMBL/GenBank/DDBJ databases">
        <authorList>
            <person name="Krishnakumar V."/>
            <person name="Cheung F."/>
            <person name="Xiao Y."/>
            <person name="Chan A."/>
            <person name="Moskal W.A."/>
            <person name="Town C.D."/>
        </authorList>
    </citation>
    <scope>NUCLEOTIDE SEQUENCE [MRNA]</scope>
</reference>
<reference key="3">
    <citation type="journal article" date="2011" name="Nature">
        <title>The Medicago genome provides insight into the evolution of rhizobial symbioses.</title>
        <authorList>
            <person name="Young N.D."/>
            <person name="Debelle F."/>
            <person name="Oldroyd G.E.D."/>
            <person name="Geurts R."/>
            <person name="Cannon S.B."/>
            <person name="Udvardi M.K."/>
            <person name="Benedito V.A."/>
            <person name="Mayer K.F.X."/>
            <person name="Gouzy J."/>
            <person name="Schoof H."/>
            <person name="Van de Peer Y."/>
            <person name="Proost S."/>
            <person name="Cook D.R."/>
            <person name="Meyers B.C."/>
            <person name="Spannagl M."/>
            <person name="Cheung F."/>
            <person name="De Mita S."/>
            <person name="Krishnakumar V."/>
            <person name="Gundlach H."/>
            <person name="Zhou S."/>
            <person name="Mudge J."/>
            <person name="Bharti A.K."/>
            <person name="Murray J.D."/>
            <person name="Naoumkina M.A."/>
            <person name="Rosen B."/>
            <person name="Silverstein K.A.T."/>
            <person name="Tang H."/>
            <person name="Rombauts S."/>
            <person name="Zhao P.X."/>
            <person name="Zhou P."/>
            <person name="Barbe V."/>
            <person name="Bardou P."/>
            <person name="Bechner M."/>
            <person name="Bellec A."/>
            <person name="Berger A."/>
            <person name="Berges H."/>
            <person name="Bidwell S."/>
            <person name="Bisseling T."/>
            <person name="Choisne N."/>
            <person name="Couloux A."/>
            <person name="Denny R."/>
            <person name="Deshpande S."/>
            <person name="Dai X."/>
            <person name="Doyle J.J."/>
            <person name="Dudez A.-M."/>
            <person name="Farmer A.D."/>
            <person name="Fouteau S."/>
            <person name="Franken C."/>
            <person name="Gibelin C."/>
            <person name="Gish J."/>
            <person name="Goldstein S."/>
            <person name="Gonzalez A.J."/>
            <person name="Green P.J."/>
            <person name="Hallab A."/>
            <person name="Hartog M."/>
            <person name="Hua A."/>
            <person name="Humphray S.J."/>
            <person name="Jeong D.-H."/>
            <person name="Jing Y."/>
            <person name="Jocker A."/>
            <person name="Kenton S.M."/>
            <person name="Kim D.-J."/>
            <person name="Klee K."/>
            <person name="Lai H."/>
            <person name="Lang C."/>
            <person name="Lin S."/>
            <person name="Macmil S.L."/>
            <person name="Magdelenat G."/>
            <person name="Matthews L."/>
            <person name="McCorrison J."/>
            <person name="Monaghan E.L."/>
            <person name="Mun J.-H."/>
            <person name="Najar F.Z."/>
            <person name="Nicholson C."/>
            <person name="Noirot C."/>
            <person name="O'Bleness M."/>
            <person name="Paule C.R."/>
            <person name="Poulain J."/>
            <person name="Prion F."/>
            <person name="Qin B."/>
            <person name="Qu C."/>
            <person name="Retzel E.F."/>
            <person name="Riddle C."/>
            <person name="Sallet E."/>
            <person name="Samain S."/>
            <person name="Samson N."/>
            <person name="Sanders I."/>
            <person name="Saurat O."/>
            <person name="Scarpelli C."/>
            <person name="Schiex T."/>
            <person name="Segurens B."/>
            <person name="Severin A.J."/>
            <person name="Sherrier D.J."/>
            <person name="Shi R."/>
            <person name="Sims S."/>
            <person name="Singer S.R."/>
            <person name="Sinharoy S."/>
            <person name="Sterck L."/>
            <person name="Viollet A."/>
            <person name="Wang B.-B."/>
            <person name="Wang K."/>
            <person name="Wang M."/>
            <person name="Wang X."/>
            <person name="Warfsmann J."/>
            <person name="Weissenbach J."/>
            <person name="White D.D."/>
            <person name="White J.D."/>
            <person name="Wiley G.B."/>
            <person name="Wincker P."/>
            <person name="Xing Y."/>
            <person name="Yang L."/>
            <person name="Yao Z."/>
            <person name="Ying F."/>
            <person name="Zhai J."/>
            <person name="Zhou L."/>
            <person name="Zuber A."/>
            <person name="Denarie J."/>
            <person name="Dixon R.A."/>
            <person name="May G.D."/>
            <person name="Schwartz D.C."/>
            <person name="Rogers J."/>
            <person name="Quetier F."/>
            <person name="Town C.D."/>
            <person name="Roe B.A."/>
        </authorList>
    </citation>
    <scope>NUCLEOTIDE SEQUENCE [LARGE SCALE GENOMIC DNA]</scope>
    <source>
        <strain>cv. Jemalong A17</strain>
    </source>
</reference>
<reference key="4">
    <citation type="journal article" date="2014" name="BMC Genomics">
        <title>An improved genome release (version Mt4.0) for the model legume Medicago truncatula.</title>
        <authorList>
            <person name="Tang H."/>
            <person name="Krishnakumar V."/>
            <person name="Bidwell S."/>
            <person name="Rosen B."/>
            <person name="Chan A."/>
            <person name="Zhou S."/>
            <person name="Gentzbittel L."/>
            <person name="Childs K.L."/>
            <person name="Yandell M."/>
            <person name="Gundlach H."/>
            <person name="Mayer K.F."/>
            <person name="Schwartz D.C."/>
            <person name="Town C.D."/>
        </authorList>
    </citation>
    <scope>GENOME REANNOTATION</scope>
    <source>
        <strain>cv. Jemalong A17</strain>
    </source>
</reference>
<reference key="5">
    <citation type="journal article" date="2018" name="Nat. Plants">
        <title>Whole-genome landscape of Medicago truncatula symbiotic genes.</title>
        <authorList>
            <person name="Pecrix Y."/>
            <person name="Staton S.E."/>
            <person name="Sallet E."/>
            <person name="Lelandais-Briere C."/>
            <person name="Moreau S."/>
            <person name="Carrere S."/>
            <person name="Blein T."/>
            <person name="Jardinaud M.F."/>
            <person name="Latrasse D."/>
            <person name="Zouine M."/>
            <person name="Zahm M."/>
            <person name="Kreplak J."/>
            <person name="Mayjonade B."/>
            <person name="Satge C."/>
            <person name="Perez M."/>
            <person name="Cauet S."/>
            <person name="Marande W."/>
            <person name="Chantry-Darmon C."/>
            <person name="Lopez-Roques C."/>
            <person name="Bouchez O."/>
            <person name="Berard A."/>
            <person name="Debelle F."/>
            <person name="Munos S."/>
            <person name="Bendahmane A."/>
            <person name="Berges H."/>
            <person name="Niebel A."/>
            <person name="Buitink J."/>
            <person name="Frugier F."/>
            <person name="Benhamed M."/>
            <person name="Crespi M."/>
            <person name="Gouzy J."/>
            <person name="Gamas P."/>
        </authorList>
    </citation>
    <scope>NUCLEOTIDE SEQUENCE [LARGE SCALE GENOMIC DNA]</scope>
    <source>
        <strain>cv. Jemalong A17</strain>
        <tissue>Leaf</tissue>
    </source>
</reference>
<reference key="6">
    <citation type="journal article" date="2018" name="Front. Plant Sci.">
        <title>MtCAS31 aids symbiotic nitrogen fixation by protecting the leghemoglobin MtLb120-1 under drought stress in Medicago truncatula.</title>
        <authorList>
            <person name="Li X."/>
            <person name="Feng H."/>
            <person name="Wen J."/>
            <person name="Dong J."/>
            <person name="Wang T."/>
        </authorList>
    </citation>
    <scope>FUNCTION</scope>
    <scope>DISRUPTION PHENOTYPE</scope>
    <scope>INTERACTION WITH LB120-1</scope>
    <scope>TISSUE SPECIFICITY</scope>
    <scope>DEVELOPMENTAL STAGE</scope>
    <scope>SUBCELLULAR LOCATION</scope>
    <source>
        <strain>cv. R108</strain>
    </source>
</reference>
<sequence>MSQYQQGYGDQTRRVDEYGNPLTSQGQVDQYGNPISGGGMTGATGHGHGHHQQHHGVGVDQTTGFGSNTGTGTGYGTHTGSGGTHTGGVGGYGTTTEYGSTNTGSGYGNTDIGGTGYGTGTGTGTTGYGATGGGTGVGYGGTGHDNRGVMDKIKEKIPGTDQNASTYGTGTGYGTTGIGHQQHGGDNRGVMDKIKEKIPGTDQNQYTHGTGTGTGTGYGTTGYGASGVGHQQHGEKGVMDKIKEKIPGTEQNTYGTGTGTGHGTTGYGSTGTGHGTTGYGDEQHHGEKKGIMEKIKEKLPGTGSCTGHGQGH</sequence>
<feature type="chain" id="PRO_0000460281" description="Dehydrin CAS31">
    <location>
        <begin position="1"/>
        <end position="312"/>
    </location>
</feature>
<feature type="region of interest" description="Disordered" evidence="2">
    <location>
        <begin position="1"/>
        <end position="88"/>
    </location>
</feature>
<feature type="region of interest" description="Disordered" evidence="2">
    <location>
        <begin position="248"/>
        <end position="287"/>
    </location>
</feature>
<feature type="compositionally biased region" description="Polar residues" evidence="2">
    <location>
        <begin position="21"/>
        <end position="30"/>
    </location>
</feature>
<feature type="compositionally biased region" description="Gly residues" evidence="2">
    <location>
        <begin position="35"/>
        <end position="46"/>
    </location>
</feature>
<feature type="compositionally biased region" description="Low complexity" evidence="2">
    <location>
        <begin position="55"/>
        <end position="66"/>
    </location>
</feature>
<feature type="compositionally biased region" description="Gly residues" evidence="2">
    <location>
        <begin position="67"/>
        <end position="88"/>
    </location>
</feature>
<feature type="compositionally biased region" description="Gly residues" evidence="2">
    <location>
        <begin position="256"/>
        <end position="278"/>
    </location>
</feature>
<feature type="sequence conflict" description="In Ref. 2; AFK45736." evidence="7" ref="2">
    <original>G</original>
    <variation>R</variation>
    <location>
        <position position="229"/>
    </location>
</feature>
<accession>B1NY81</accession>
<accession>I3SZP4</accession>
<gene>
    <name evidence="5 6" type="primary">CAS31</name>
    <name evidence="9" type="ordered locus">MTR_6g084640</name>
    <name evidence="8" type="ordered locus">Medtr6g084640</name>
    <name evidence="10" type="ORF">MtrunA17_Chr6g0484671</name>
</gene>
<proteinExistence type="evidence at protein level"/>
<comment type="function">
    <text evidence="1 4">Intrinsically disordered protein acting as a chaperone (By similarity). Ensures leghemoglobins (e.g. LB120-1) protection from denaturation under thermal and drought stresses to delay root nodule nitrogenase inactivation and subsequent nodule senescence, thus supporting symbiotic nitrogen fixation (SNF) (PubMed:29868087).</text>
</comment>
<comment type="subunit">
    <text evidence="4">Interacts with the leghemoglobin LB120-1 in the cytoplasm; this interaction leads to LB120-1 protection from denaturation under thermal and drought stresses.</text>
</comment>
<comment type="subcellular location">
    <subcellularLocation>
        <location evidence="4">Cytoplasm</location>
    </subcellularLocation>
</comment>
<comment type="tissue specificity">
    <text evidence="4">Expressed in nodules and roots.</text>
</comment>
<comment type="developmental stage">
    <text evidence="4">In roots nodules, observed in the meristematic zone (I), the infection zone (II), and the nitrogen-fixation zone (PubMed:29868087). Also present in the vascular tissue of nodules (PubMed:29868087).</text>
</comment>
<comment type="induction">
    <text evidence="3">By cold.</text>
</comment>
<comment type="disruption phenotype">
    <text evidence="4">Reduced nitrogenase activity in root nodules, lower ATP/ADP ratio, increased expression of nodule senescence genes and higher accumulation of amyloplasts under dehydration conditions.</text>
</comment>
<comment type="similarity">
    <text evidence="7">Belongs to the plant dehydrin family.</text>
</comment>
<keyword id="KW-0963">Cytoplasm</keyword>
<keyword id="KW-0536">Nodulation</keyword>
<keyword id="KW-1185">Reference proteome</keyword>
<keyword id="KW-0346">Stress response</keyword>
<organism>
    <name type="scientific">Medicago truncatula</name>
    <name type="common">Barrel medic</name>
    <name type="synonym">Medicago tribuloides</name>
    <dbReference type="NCBI Taxonomy" id="3880"/>
    <lineage>
        <taxon>Eukaryota</taxon>
        <taxon>Viridiplantae</taxon>
        <taxon>Streptophyta</taxon>
        <taxon>Embryophyta</taxon>
        <taxon>Tracheophyta</taxon>
        <taxon>Spermatophyta</taxon>
        <taxon>Magnoliopsida</taxon>
        <taxon>eudicotyledons</taxon>
        <taxon>Gunneridae</taxon>
        <taxon>Pentapetalae</taxon>
        <taxon>rosids</taxon>
        <taxon>fabids</taxon>
        <taxon>Fabales</taxon>
        <taxon>Fabaceae</taxon>
        <taxon>Papilionoideae</taxon>
        <taxon>50 kb inversion clade</taxon>
        <taxon>NPAAA clade</taxon>
        <taxon>Hologalegina</taxon>
        <taxon>IRL clade</taxon>
        <taxon>Trifolieae</taxon>
        <taxon>Medicago</taxon>
    </lineage>
</organism>
<name>CAS31_MEDTR</name>
<dbReference type="EMBL" id="EU139871">
    <property type="protein sequence ID" value="ABX80067.1"/>
    <property type="molecule type" value="Genomic_DNA"/>
</dbReference>
<dbReference type="EMBL" id="BT145942">
    <property type="protein sequence ID" value="AFK45736.1"/>
    <property type="molecule type" value="mRNA"/>
</dbReference>
<dbReference type="EMBL" id="CM001222">
    <property type="protein sequence ID" value="KEH27046.1"/>
    <property type="molecule type" value="Genomic_DNA"/>
</dbReference>
<dbReference type="EMBL" id="PSQE01000006">
    <property type="protein sequence ID" value="RHN52821.1"/>
    <property type="molecule type" value="Genomic_DNA"/>
</dbReference>
<dbReference type="STRING" id="3880.B1NY81"/>
<dbReference type="EnsemblPlants" id="rna37538">
    <property type="protein sequence ID" value="RHN52821.1"/>
    <property type="gene ID" value="gene37538"/>
</dbReference>
<dbReference type="GeneID" id="25496855"/>
<dbReference type="Gramene" id="rna37538">
    <property type="protein sequence ID" value="RHN52821.1"/>
    <property type="gene ID" value="gene37538"/>
</dbReference>
<dbReference type="KEGG" id="mtr:25496855"/>
<dbReference type="HOGENOM" id="CLU_060028_0_0_1"/>
<dbReference type="OrthoDB" id="1166395at2759"/>
<dbReference type="Proteomes" id="UP000002051">
    <property type="component" value="Chromosome 6"/>
</dbReference>
<dbReference type="Proteomes" id="UP000265566">
    <property type="component" value="Chromosome 6"/>
</dbReference>
<dbReference type="ExpressionAtlas" id="B1NY81">
    <property type="expression patterns" value="differential"/>
</dbReference>
<dbReference type="GO" id="GO:0005737">
    <property type="term" value="C:cytoplasm"/>
    <property type="evidence" value="ECO:0000314"/>
    <property type="project" value="UniProtKB"/>
</dbReference>
<dbReference type="GO" id="GO:0009631">
    <property type="term" value="P:cold acclimation"/>
    <property type="evidence" value="ECO:0000318"/>
    <property type="project" value="GO_Central"/>
</dbReference>
<dbReference type="GO" id="GO:0009877">
    <property type="term" value="P:nodulation"/>
    <property type="evidence" value="ECO:0000315"/>
    <property type="project" value="UniProtKB"/>
</dbReference>
<dbReference type="GO" id="GO:0009737">
    <property type="term" value="P:response to abscisic acid"/>
    <property type="evidence" value="ECO:0000318"/>
    <property type="project" value="GO_Central"/>
</dbReference>
<dbReference type="GO" id="GO:0009409">
    <property type="term" value="P:response to cold"/>
    <property type="evidence" value="ECO:0000270"/>
    <property type="project" value="UniProtKB"/>
</dbReference>
<dbReference type="GO" id="GO:0009408">
    <property type="term" value="P:response to heat"/>
    <property type="evidence" value="ECO:0000315"/>
    <property type="project" value="UniProtKB"/>
</dbReference>
<dbReference type="GO" id="GO:0009414">
    <property type="term" value="P:response to water deprivation"/>
    <property type="evidence" value="ECO:0000315"/>
    <property type="project" value="UniProtKB"/>
</dbReference>
<dbReference type="InterPro" id="IPR000167">
    <property type="entry name" value="Dehydrin"/>
</dbReference>
<dbReference type="InterPro" id="IPR030513">
    <property type="entry name" value="Dehydrin_CS"/>
</dbReference>
<dbReference type="PANTHER" id="PTHR33346:SF42">
    <property type="entry name" value="DEHYDRIN XERO 1"/>
    <property type="match status" value="1"/>
</dbReference>
<dbReference type="PANTHER" id="PTHR33346">
    <property type="entry name" value="DEHYDRIN XERO 2-RELATED"/>
    <property type="match status" value="1"/>
</dbReference>
<dbReference type="Pfam" id="PF00257">
    <property type="entry name" value="Dehydrin"/>
    <property type="match status" value="1"/>
</dbReference>
<dbReference type="PROSITE" id="PS00823">
    <property type="entry name" value="DEHYDRIN_2"/>
    <property type="match status" value="2"/>
</dbReference>